<gene>
    <name evidence="1" type="primary">thrB</name>
    <name type="ordered locus">BCAH820_2004</name>
</gene>
<comment type="function">
    <text evidence="1">Catalyzes the ATP-dependent phosphorylation of L-homoserine to L-homoserine phosphate.</text>
</comment>
<comment type="catalytic activity">
    <reaction evidence="1">
        <text>L-homoserine + ATP = O-phospho-L-homoserine + ADP + H(+)</text>
        <dbReference type="Rhea" id="RHEA:13985"/>
        <dbReference type="ChEBI" id="CHEBI:15378"/>
        <dbReference type="ChEBI" id="CHEBI:30616"/>
        <dbReference type="ChEBI" id="CHEBI:57476"/>
        <dbReference type="ChEBI" id="CHEBI:57590"/>
        <dbReference type="ChEBI" id="CHEBI:456216"/>
        <dbReference type="EC" id="2.7.1.39"/>
    </reaction>
</comment>
<comment type="pathway">
    <text evidence="1">Amino-acid biosynthesis; L-threonine biosynthesis; L-threonine from L-aspartate: step 4/5.</text>
</comment>
<comment type="subcellular location">
    <subcellularLocation>
        <location evidence="1">Cytoplasm</location>
    </subcellularLocation>
</comment>
<comment type="similarity">
    <text evidence="1">Belongs to the GHMP kinase family. Homoserine kinase subfamily.</text>
</comment>
<evidence type="ECO:0000255" key="1">
    <source>
        <dbReference type="HAMAP-Rule" id="MF_00384"/>
    </source>
</evidence>
<dbReference type="EC" id="2.7.1.39" evidence="1"/>
<dbReference type="EMBL" id="CP001283">
    <property type="protein sequence ID" value="ACK88067.1"/>
    <property type="molecule type" value="Genomic_DNA"/>
</dbReference>
<dbReference type="RefSeq" id="WP_000612669.1">
    <property type="nucleotide sequence ID" value="NC_011773.1"/>
</dbReference>
<dbReference type="SMR" id="B7JKG2"/>
<dbReference type="KEGG" id="bcu:BCAH820_2004"/>
<dbReference type="HOGENOM" id="CLU_041243_0_0_9"/>
<dbReference type="UniPathway" id="UPA00050">
    <property type="reaction ID" value="UER00064"/>
</dbReference>
<dbReference type="Proteomes" id="UP000001363">
    <property type="component" value="Chromosome"/>
</dbReference>
<dbReference type="GO" id="GO:0005737">
    <property type="term" value="C:cytoplasm"/>
    <property type="evidence" value="ECO:0007669"/>
    <property type="project" value="UniProtKB-SubCell"/>
</dbReference>
<dbReference type="GO" id="GO:0005524">
    <property type="term" value="F:ATP binding"/>
    <property type="evidence" value="ECO:0007669"/>
    <property type="project" value="UniProtKB-UniRule"/>
</dbReference>
<dbReference type="GO" id="GO:0004413">
    <property type="term" value="F:homoserine kinase activity"/>
    <property type="evidence" value="ECO:0007669"/>
    <property type="project" value="UniProtKB-UniRule"/>
</dbReference>
<dbReference type="GO" id="GO:0009088">
    <property type="term" value="P:threonine biosynthetic process"/>
    <property type="evidence" value="ECO:0007669"/>
    <property type="project" value="UniProtKB-UniRule"/>
</dbReference>
<dbReference type="Gene3D" id="3.30.230.10">
    <property type="match status" value="1"/>
</dbReference>
<dbReference type="Gene3D" id="3.30.70.890">
    <property type="entry name" value="GHMP kinase, C-terminal domain"/>
    <property type="match status" value="1"/>
</dbReference>
<dbReference type="HAMAP" id="MF_00384">
    <property type="entry name" value="Homoser_kinase"/>
    <property type="match status" value="1"/>
</dbReference>
<dbReference type="InterPro" id="IPR013750">
    <property type="entry name" value="GHMP_kinase_C_dom"/>
</dbReference>
<dbReference type="InterPro" id="IPR036554">
    <property type="entry name" value="GHMP_kinase_C_sf"/>
</dbReference>
<dbReference type="InterPro" id="IPR006204">
    <property type="entry name" value="GHMP_kinase_N_dom"/>
</dbReference>
<dbReference type="InterPro" id="IPR006203">
    <property type="entry name" value="GHMP_knse_ATP-bd_CS"/>
</dbReference>
<dbReference type="InterPro" id="IPR000870">
    <property type="entry name" value="Homoserine_kinase"/>
</dbReference>
<dbReference type="InterPro" id="IPR020568">
    <property type="entry name" value="Ribosomal_Su5_D2-typ_SF"/>
</dbReference>
<dbReference type="InterPro" id="IPR014721">
    <property type="entry name" value="Ribsml_uS5_D2-typ_fold_subgr"/>
</dbReference>
<dbReference type="NCBIfam" id="TIGR00191">
    <property type="entry name" value="thrB"/>
    <property type="match status" value="1"/>
</dbReference>
<dbReference type="PANTHER" id="PTHR20861:SF1">
    <property type="entry name" value="HOMOSERINE KINASE"/>
    <property type="match status" value="1"/>
</dbReference>
<dbReference type="PANTHER" id="PTHR20861">
    <property type="entry name" value="HOMOSERINE/4-DIPHOSPHOCYTIDYL-2-C-METHYL-D-ERYTHRITOL KINASE"/>
    <property type="match status" value="1"/>
</dbReference>
<dbReference type="Pfam" id="PF08544">
    <property type="entry name" value="GHMP_kinases_C"/>
    <property type="match status" value="1"/>
</dbReference>
<dbReference type="Pfam" id="PF00288">
    <property type="entry name" value="GHMP_kinases_N"/>
    <property type="match status" value="1"/>
</dbReference>
<dbReference type="PIRSF" id="PIRSF000676">
    <property type="entry name" value="Homoser_kin"/>
    <property type="match status" value="1"/>
</dbReference>
<dbReference type="PRINTS" id="PR00958">
    <property type="entry name" value="HOMSERKINASE"/>
</dbReference>
<dbReference type="SUPFAM" id="SSF55060">
    <property type="entry name" value="GHMP Kinase, C-terminal domain"/>
    <property type="match status" value="1"/>
</dbReference>
<dbReference type="SUPFAM" id="SSF54211">
    <property type="entry name" value="Ribosomal protein S5 domain 2-like"/>
    <property type="match status" value="1"/>
</dbReference>
<dbReference type="PROSITE" id="PS00627">
    <property type="entry name" value="GHMP_KINASES_ATP"/>
    <property type="match status" value="1"/>
</dbReference>
<reference key="1">
    <citation type="submission" date="2008-10" db="EMBL/GenBank/DDBJ databases">
        <title>Genome sequence of Bacillus cereus AH820.</title>
        <authorList>
            <person name="Dodson R.J."/>
            <person name="Durkin A.S."/>
            <person name="Rosovitz M.J."/>
            <person name="Rasko D.A."/>
            <person name="Hoffmaster A."/>
            <person name="Ravel J."/>
            <person name="Sutton G."/>
        </authorList>
    </citation>
    <scope>NUCLEOTIDE SEQUENCE [LARGE SCALE GENOMIC DNA]</scope>
    <source>
        <strain>AH820</strain>
    </source>
</reference>
<organism>
    <name type="scientific">Bacillus cereus (strain AH820)</name>
    <dbReference type="NCBI Taxonomy" id="405535"/>
    <lineage>
        <taxon>Bacteria</taxon>
        <taxon>Bacillati</taxon>
        <taxon>Bacillota</taxon>
        <taxon>Bacilli</taxon>
        <taxon>Bacillales</taxon>
        <taxon>Bacillaceae</taxon>
        <taxon>Bacillus</taxon>
        <taxon>Bacillus cereus group</taxon>
    </lineage>
</organism>
<protein>
    <recommendedName>
        <fullName evidence="1">Homoserine kinase</fullName>
        <shortName evidence="1">HK</shortName>
        <shortName evidence="1">HSK</shortName>
        <ecNumber evidence="1">2.7.1.39</ecNumber>
    </recommendedName>
</protein>
<feature type="chain" id="PRO_1000122403" description="Homoserine kinase">
    <location>
        <begin position="1"/>
        <end position="297"/>
    </location>
</feature>
<feature type="binding site" evidence="1">
    <location>
        <begin position="82"/>
        <end position="92"/>
    </location>
    <ligand>
        <name>ATP</name>
        <dbReference type="ChEBI" id="CHEBI:30616"/>
    </ligand>
</feature>
<accession>B7JKG2</accession>
<sequence length="297" mass="32135">MIPLSIRVPASTANVGPGFDSVGIALSLYLHVVVKEKSDKWQVIHSFEDSIPTDDKNLIVSTACKVCPSLSPHIIEVTSNIPLTRGLGSSASAIVAGIELANQLGKLNLTIDQKVQIATNFEGHPDNVAASILGGTVIGALDGKNVSVVRIESKELGVISLIPNEELNTDESRSVLPDVFPFHEAVKASAISNVLVAALCQKKWEVVGEMMERDHFHEPYRLELVPLLPSIRKCAKEFGAYGTALSGAGPSIFILTPYEKRQEIAEQLARVFTSMKVCELEIDHRGITVNKKEHIGL</sequence>
<keyword id="KW-0028">Amino-acid biosynthesis</keyword>
<keyword id="KW-0067">ATP-binding</keyword>
<keyword id="KW-0963">Cytoplasm</keyword>
<keyword id="KW-0418">Kinase</keyword>
<keyword id="KW-0547">Nucleotide-binding</keyword>
<keyword id="KW-0791">Threonine biosynthesis</keyword>
<keyword id="KW-0808">Transferase</keyword>
<name>KHSE_BACC0</name>
<proteinExistence type="inferred from homology"/>